<protein>
    <recommendedName>
        <fullName evidence="6">S-layer protein A</fullName>
    </recommendedName>
    <alternativeName>
        <fullName evidence="6">Surface layer large protein</fullName>
    </alternativeName>
</protein>
<comment type="function">
    <text evidence="1">S-layer large protein. May form the highly ordered outer sheath.</text>
</comment>
<comment type="subunit">
    <text evidence="1">The mushroom-shaped unit cells of the Sulfolobales' S-layers may consist of three SlaB subunits and six SlaA subunits.</text>
</comment>
<comment type="subcellular location">
    <subcellularLocation>
        <location evidence="4">Secreted</location>
        <location evidence="4">Cell wall</location>
        <location evidence="4">S-layer</location>
    </subcellularLocation>
</comment>
<comment type="PTM">
    <text evidence="4">Glycosylated. C-terminal glycosylation sites are modified with a heterogeneous family of glycans, with the largest having a composition Glc(1)Man(2)GlcNAc(2) plus 6-sulfoquinovose (QuiS).</text>
</comment>
<comment type="similarity">
    <text evidence="6">Belongs to the Sulfolobales SlaA family.</text>
</comment>
<sequence>MNKLVGLLVSSLFLASILIGIAPAITTTALTPPVSAGGIQAYLLTGSGAPASGLVLFVVNVSNIQVSSSNVTNVISTVVSNIQINAKTENAQTGATTGSVTVRFPTSGYNAYYDSVDKVVFVVVSFLYPYTTTSVNIPLSYLSKYLPGLLTAQPYDETGAQVTSVSSTPFGSLIDTSTGQQILGTNPVLTSYNSYTTQANTNMQEGVVSGTLTSFTLGGQSFSGSTVPVILYAPFIFSNSPYQAGLYNPMQVNGNLGSLSSEAYYHPVIWGRALINTTLIDTYASGSVPFTFQLNYSVPGPLTINMAQLAWIASINNLPTSFTYLSYKFSNGYESFLGIISNSTQLTAGALTINPSGNFTINGKKFYVYLLVVGSTNSTTPVEYVTKLVVEYPSSTNFLPQGVTVTTSSNKYTLPVYEIGGPAGTTITLTGNWYSTPYTVQITVGSTPTLTNYVSQILLKAVAYEGINVSTTQSPYYSTAILSTPPSEISITGSSTITAQGKLTATSASATVNLLTNATLTYENIPLTQYSFNGIIVTPGYAAINGTTAMAYVIGALYNKTSDYVLSFAGSQEPMQVMNNNLTEVTTLAPFGLTLLAPSVPATETGTSPLQLEFFTVPSTSYIALVDFGLWGNLTSVTVSAYDTVNNKLSVNLGYFYGIVIPPSISTAPYNYQNFICPNNYVTVTIYDPDAVLDPYPSGSFTTSSLPLKYGNMNITGAVIFPGSSVYNPSGVFGYSNFNKGAAVTTFTYTAQSGPFSPVALTGNTNYLSQYADNNPTDNYYFIQTVNGMPVLMGGLSIVASPVSASLPSSTSSPGFMYLLPSAAQVPSPLPGMATPNYNLNIYITYKIDGATVGNNMINGLYVASQNTLIYVVPNGSFVGSNIKLTYTTTDYAVLHYFYSTGQYKVFKTVSVPNVTANLYFPSSTTPLYQLSVPLYLSEPYYGSPLPTYIGLGTNGTSLWNSPNYVLFGVSAVQQYLGFIKSISVTLSNGTTVVIPLTTSNMQTLFPQLVGQELQACNGTFQFGISITGLEKLLNLNVQQLNNSILSVTYHDYVTGETLTATTKLVALSTLSLVAKGAGVVEFLLTAYPYTGNITFAPPWFIAENVVKQPFMTYSDLQFAKTNPSAILSLSTVNITVVGLGGKASVYYNSTSGQTVITNIYGQTVATLSGNVLPTLTELAAGNGTFTGSLQFTIVPNNTVVQIPSSLTKTSFAVYTNGSLAIVLNGKAYSLGPAGLFLLPFVTYTGSAIGANATAIITVSDGVGTSTTQVPITAENFTPIRLAPFQVPAQVPLPNAPKLKYEYNGSIVITPQQQVLKIYVTSILPYPQEFQIQAFVYEASQFNVHTGSPTAAPVYFSYSAVRAYPALGIGTSVPNLLVYVQLQGISNLPAGKYVIVLSAVPFAGGPVLSEYPAQLIFTNVTLTQ</sequence>
<dbReference type="EMBL" id="CP000077">
    <property type="protein sequence ID" value="AAY81636.1"/>
    <property type="molecule type" value="Genomic_DNA"/>
</dbReference>
<dbReference type="EMBL" id="BN000824">
    <property type="protein sequence ID" value="CAJ30479.1"/>
    <property type="molecule type" value="Genomic_DNA"/>
</dbReference>
<dbReference type="RefSeq" id="WP_011279138.1">
    <property type="nucleotide sequence ID" value="NC_007181.1"/>
</dbReference>
<dbReference type="PDB" id="7ZCX">
    <property type="method" value="EM"/>
    <property type="resolution" value="3.00 A"/>
    <property type="chains" value="AAA=1-1424"/>
</dbReference>
<dbReference type="PDB" id="8AN2">
    <property type="method" value="EM"/>
    <property type="resolution" value="3.20 A"/>
    <property type="chains" value="AAA=1-1424"/>
</dbReference>
<dbReference type="PDB" id="8AN3">
    <property type="method" value="EM"/>
    <property type="resolution" value="3.90 A"/>
    <property type="chains" value="AAA=1-1424"/>
</dbReference>
<dbReference type="PDB" id="8QOX">
    <property type="method" value="EM"/>
    <property type="resolution" value="11.20 A"/>
    <property type="chains" value="A/V/W/Z=1-1424"/>
</dbReference>
<dbReference type="PDB" id="8QP0">
    <property type="method" value="EM"/>
    <property type="resolution" value="11.20 A"/>
    <property type="chains" value="A/D/E/F/G/H=1-1424"/>
</dbReference>
<dbReference type="PDBsum" id="7ZCX"/>
<dbReference type="PDBsum" id="8AN2"/>
<dbReference type="PDBsum" id="8AN3"/>
<dbReference type="PDBsum" id="8QOX"/>
<dbReference type="PDBsum" id="8QP0"/>
<dbReference type="EMDB" id="EMD-14635"/>
<dbReference type="EMDB" id="EMD-15530"/>
<dbReference type="EMDB" id="EMD-15531"/>
<dbReference type="SMR" id="Q4J6E5"/>
<dbReference type="STRING" id="330779.Saci_2355"/>
<dbReference type="GlyCosmos" id="Q4J6E5">
    <property type="glycosylation" value="28 sites, No reported glycans"/>
</dbReference>
<dbReference type="iPTMnet" id="Q4J6E5"/>
<dbReference type="GeneID" id="14552863"/>
<dbReference type="GeneID" id="78440339"/>
<dbReference type="KEGG" id="sai:Saci_2355"/>
<dbReference type="PATRIC" id="fig|330779.12.peg.2362"/>
<dbReference type="eggNOG" id="arCOG06039">
    <property type="taxonomic scope" value="Archaea"/>
</dbReference>
<dbReference type="HOGENOM" id="CLU_264979_0_0_2"/>
<dbReference type="Proteomes" id="UP000001018">
    <property type="component" value="Chromosome"/>
</dbReference>
<dbReference type="GO" id="GO:0005576">
    <property type="term" value="C:extracellular region"/>
    <property type="evidence" value="ECO:0007669"/>
    <property type="project" value="UniProtKB-KW"/>
</dbReference>
<dbReference type="GO" id="GO:0030115">
    <property type="term" value="C:S-layer"/>
    <property type="evidence" value="ECO:0007669"/>
    <property type="project" value="UniProtKB-SubCell"/>
</dbReference>
<dbReference type="InterPro" id="IPR053694">
    <property type="entry name" value="S-layer_large"/>
</dbReference>
<dbReference type="NCBIfam" id="NF041073">
    <property type="entry name" value="S-lay_SlaA_Sulfolob"/>
    <property type="match status" value="1"/>
</dbReference>
<reference key="1">
    <citation type="journal article" date="2005" name="Can. J. Microbiol.">
        <title>Molecular organization of selected prokaryotic S-layer proteins.</title>
        <authorList>
            <person name="Claus H."/>
            <person name="Akca E."/>
            <person name="Debaerdemaeker T."/>
            <person name="Evrard C."/>
            <person name="Declercq J.P."/>
            <person name="Harris J.R."/>
            <person name="Schlott B."/>
            <person name="Konig H."/>
        </authorList>
    </citation>
    <scope>NUCLEOTIDE SEQUENCE [GENOMIC DNA]</scope>
    <source>
        <strain>ATCC 33909 / DSM 639 / JCM 8929 / NBRC 15157 / NCIMB 11770</strain>
    </source>
</reference>
<reference key="2">
    <citation type="journal article" date="2005" name="J. Bacteriol.">
        <title>The genome of Sulfolobus acidocaldarius, a model organism of the Crenarchaeota.</title>
        <authorList>
            <person name="Chen L."/>
            <person name="Bruegger K."/>
            <person name="Skovgaard M."/>
            <person name="Redder P."/>
            <person name="She Q."/>
            <person name="Torarinsson E."/>
            <person name="Greve B."/>
            <person name="Awayez M."/>
            <person name="Zibat A."/>
            <person name="Klenk H.-P."/>
            <person name="Garrett R.A."/>
        </authorList>
    </citation>
    <scope>NUCLEOTIDE SEQUENCE [LARGE SCALE GENOMIC DNA]</scope>
    <source>
        <strain>ATCC 33909 / DSM 639 / JCM 8929 / NBRC 15157 / NCIMB 11770</strain>
    </source>
</reference>
<reference key="3">
    <citation type="journal article" date="2010" name="Archaea">
        <title>The S-layer glycoprotein of the crenarchaeote Sulfolobus acidocaldarius is glycosylated at multiple sites with chitobiose-linked N-glycans.</title>
        <authorList>
            <person name="Peyfoon E."/>
            <person name="Meyer B."/>
            <person name="Hitchen P.G."/>
            <person name="Panico M."/>
            <person name="Morris H.R."/>
            <person name="Haslam S.M."/>
            <person name="Albers S.V."/>
            <person name="Dell A."/>
        </authorList>
    </citation>
    <scope>SUBCELLULAR LOCATION</scope>
    <scope>GLYCOSYLATION AT ASN-1042; ASN-1093; ASN-1134; ASN-1197; ASN-1217; ASN-1252; ASN-1276; ASN-1304 AND ASN-1419</scope>
    <source>
        <strain>ATCC 33909 / DSM 639 / JCM 8929 / NBRC 15157 / NCIMB 11770</strain>
    </source>
</reference>
<organism>
    <name type="scientific">Sulfolobus acidocaldarius (strain ATCC 33909 / DSM 639 / JCM 8929 / NBRC 15157 / NCIMB 11770)</name>
    <dbReference type="NCBI Taxonomy" id="330779"/>
    <lineage>
        <taxon>Archaea</taxon>
        <taxon>Thermoproteota</taxon>
        <taxon>Thermoprotei</taxon>
        <taxon>Sulfolobales</taxon>
        <taxon>Sulfolobaceae</taxon>
        <taxon>Sulfolobus</taxon>
    </lineage>
</organism>
<keyword id="KW-0002">3D-structure</keyword>
<keyword id="KW-0134">Cell wall</keyword>
<keyword id="KW-0325">Glycoprotein</keyword>
<keyword id="KW-1185">Reference proteome</keyword>
<keyword id="KW-0701">S-layer</keyword>
<keyword id="KW-0964">Secreted</keyword>
<keyword id="KW-0732">Signal</keyword>
<accession>Q4J6E5</accession>
<accession>Q2M1E8</accession>
<name>SLAA_SULAC</name>
<evidence type="ECO:0000250" key="1">
    <source>
        <dbReference type="UniProtKB" id="Q980C7"/>
    </source>
</evidence>
<evidence type="ECO:0000255" key="2"/>
<evidence type="ECO:0000255" key="3">
    <source>
        <dbReference type="PROSITE-ProRule" id="PRU00498"/>
    </source>
</evidence>
<evidence type="ECO:0000269" key="4">
    <source>
    </source>
</evidence>
<evidence type="ECO:0000303" key="5">
    <source>
    </source>
</evidence>
<evidence type="ECO:0000305" key="6"/>
<evidence type="ECO:0000312" key="7">
    <source>
        <dbReference type="EMBL" id="AAY81636.1"/>
    </source>
</evidence>
<evidence type="ECO:0000312" key="8">
    <source>
        <dbReference type="EMBL" id="CAJ30479.1"/>
    </source>
</evidence>
<proteinExistence type="evidence at protein level"/>
<gene>
    <name evidence="5" type="primary">slaA</name>
    <name evidence="8" type="synonym">slp1</name>
    <name evidence="7" type="ordered locus">Saci_2355</name>
</gene>
<feature type="signal peptide" evidence="2">
    <location>
        <begin position="1"/>
        <end position="24"/>
    </location>
</feature>
<feature type="chain" id="PRO_0000444051" description="S-layer protein A">
    <location>
        <begin position="25"/>
        <end position="1424"/>
    </location>
</feature>
<feature type="glycosylation site" description="N-linked (GlcNAc...) asparagine" evidence="3">
    <location>
        <position position="60"/>
    </location>
</feature>
<feature type="glycosylation site" description="N-linked (GlcNAc...) asparagine" evidence="3">
    <location>
        <position position="70"/>
    </location>
</feature>
<feature type="glycosylation site" description="N-linked (GlcNAc...) asparagine" evidence="3">
    <location>
        <position position="276"/>
    </location>
</feature>
<feature type="glycosylation site" description="N-linked (GlcNAc...) asparagine" evidence="3">
    <location>
        <position position="295"/>
    </location>
</feature>
<feature type="glycosylation site" description="N-linked (GlcNAc...) asparagine" evidence="3">
    <location>
        <position position="342"/>
    </location>
</feature>
<feature type="glycosylation site" description="N-linked (GlcNAc...) asparagine" evidence="3">
    <location>
        <position position="358"/>
    </location>
</feature>
<feature type="glycosylation site" description="N-linked (GlcNAc...) asparagine" evidence="3">
    <location>
        <position position="377"/>
    </location>
</feature>
<feature type="glycosylation site" description="N-linked (GlcNAc...) asparagine" evidence="3">
    <location>
        <position position="468"/>
    </location>
</feature>
<feature type="glycosylation site" description="N-linked (GlcNAc...) asparagine" evidence="3">
    <location>
        <position position="517"/>
    </location>
</feature>
<feature type="glycosylation site" description="N-linked (GlcNAc...) asparagine" evidence="3">
    <location>
        <position position="545"/>
    </location>
</feature>
<feature type="glycosylation site" description="N-linked (GlcNAc...) asparagine" evidence="3">
    <location>
        <position position="559"/>
    </location>
</feature>
<feature type="glycosylation site" description="N-linked (GlcNAc...) asparagine" evidence="3">
    <location>
        <position position="581"/>
    </location>
</feature>
<feature type="glycosylation site" description="N-linked (GlcNAc...) asparagine" evidence="3">
    <location>
        <position position="633"/>
    </location>
</feature>
<feature type="glycosylation site" description="N-linked (GlcNAc...) asparagine" evidence="3">
    <location>
        <position position="714"/>
    </location>
</feature>
<feature type="glycosylation site" description="N-linked (GlcNAc...) asparagine" evidence="3">
    <location>
        <position position="875"/>
    </location>
</feature>
<feature type="glycosylation site" description="N-linked (GlcNAc...) asparagine" evidence="3">
    <location>
        <position position="914"/>
    </location>
</feature>
<feature type="glycosylation site" description="N-linked (GlcNAc...) asparagine" evidence="3">
    <location>
        <position position="955"/>
    </location>
</feature>
<feature type="glycosylation site" description="N-linked (GlcNAc...) asparagine" evidence="3">
    <location>
        <position position="989"/>
    </location>
</feature>
<feature type="glycosylation site" description="N-linked (GlcNAc...) asparagine" evidence="3">
    <location>
        <position position="1018"/>
    </location>
</feature>
<feature type="glycosylation site" description="N-linked (GlcNAc...) asparagine" evidence="3 4">
    <location>
        <position position="1042"/>
    </location>
</feature>
<feature type="glycosylation site" description="N-linked (GlcNAc...) asparagine" evidence="3 4">
    <location>
        <position position="1093"/>
    </location>
</feature>
<feature type="glycosylation site" description="N-linked (GlcNAc...) asparagine" evidence="3 4">
    <location>
        <position position="1134"/>
    </location>
</feature>
<feature type="glycosylation site" description="N-linked (GlcNAc...) asparagine" evidence="3 4">
    <location>
        <position position="1197"/>
    </location>
</feature>
<feature type="glycosylation site" description="N-linked (GlcNAc...) asparagine" evidence="3 4">
    <location>
        <position position="1217"/>
    </location>
</feature>
<feature type="glycosylation site" description="N-linked (GlcNAc...) asparagine" evidence="3 4">
    <location>
        <position position="1252"/>
    </location>
</feature>
<feature type="glycosylation site" description="N-linked (GlcNAc...) asparagine" evidence="4">
    <location>
        <position position="1276"/>
    </location>
</feature>
<feature type="glycosylation site" description="N-linked (GlcNAc...) asparagine" evidence="3 4">
    <location>
        <position position="1304"/>
    </location>
</feature>
<feature type="glycosylation site" description="N-linked (GlcNAc...) asparagine" evidence="3 4">
    <location>
        <position position="1419"/>
    </location>
</feature>